<protein>
    <recommendedName>
        <fullName evidence="1">Small ribosomal subunit protein uS8</fullName>
    </recommendedName>
    <alternativeName>
        <fullName evidence="2">30S ribosomal protein S8</fullName>
    </alternativeName>
</protein>
<keyword id="KW-1185">Reference proteome</keyword>
<keyword id="KW-0687">Ribonucleoprotein</keyword>
<keyword id="KW-0689">Ribosomal protein</keyword>
<keyword id="KW-0694">RNA-binding</keyword>
<keyword id="KW-0699">rRNA-binding</keyword>
<name>RS8_EXIS2</name>
<dbReference type="EMBL" id="CP001022">
    <property type="protein sequence ID" value="ACB59597.1"/>
    <property type="molecule type" value="Genomic_DNA"/>
</dbReference>
<dbReference type="RefSeq" id="WP_012369023.1">
    <property type="nucleotide sequence ID" value="NC_010556.1"/>
</dbReference>
<dbReference type="SMR" id="B1YGW4"/>
<dbReference type="STRING" id="262543.Exig_0110"/>
<dbReference type="GeneID" id="90838844"/>
<dbReference type="KEGG" id="esi:Exig_0110"/>
<dbReference type="eggNOG" id="COG0096">
    <property type="taxonomic scope" value="Bacteria"/>
</dbReference>
<dbReference type="HOGENOM" id="CLU_098428_0_2_9"/>
<dbReference type="OrthoDB" id="9802617at2"/>
<dbReference type="Proteomes" id="UP000001681">
    <property type="component" value="Chromosome"/>
</dbReference>
<dbReference type="GO" id="GO:1990904">
    <property type="term" value="C:ribonucleoprotein complex"/>
    <property type="evidence" value="ECO:0007669"/>
    <property type="project" value="UniProtKB-KW"/>
</dbReference>
<dbReference type="GO" id="GO:0005840">
    <property type="term" value="C:ribosome"/>
    <property type="evidence" value="ECO:0007669"/>
    <property type="project" value="UniProtKB-KW"/>
</dbReference>
<dbReference type="GO" id="GO:0019843">
    <property type="term" value="F:rRNA binding"/>
    <property type="evidence" value="ECO:0007669"/>
    <property type="project" value="UniProtKB-UniRule"/>
</dbReference>
<dbReference type="GO" id="GO:0003735">
    <property type="term" value="F:structural constituent of ribosome"/>
    <property type="evidence" value="ECO:0007669"/>
    <property type="project" value="InterPro"/>
</dbReference>
<dbReference type="GO" id="GO:0006412">
    <property type="term" value="P:translation"/>
    <property type="evidence" value="ECO:0007669"/>
    <property type="project" value="UniProtKB-UniRule"/>
</dbReference>
<dbReference type="FunFam" id="3.30.1370.30:FF:000002">
    <property type="entry name" value="30S ribosomal protein S8"/>
    <property type="match status" value="1"/>
</dbReference>
<dbReference type="FunFam" id="3.30.1490.10:FF:000001">
    <property type="entry name" value="30S ribosomal protein S8"/>
    <property type="match status" value="1"/>
</dbReference>
<dbReference type="Gene3D" id="3.30.1370.30">
    <property type="match status" value="1"/>
</dbReference>
<dbReference type="Gene3D" id="3.30.1490.10">
    <property type="match status" value="1"/>
</dbReference>
<dbReference type="HAMAP" id="MF_01302_B">
    <property type="entry name" value="Ribosomal_uS8_B"/>
    <property type="match status" value="1"/>
</dbReference>
<dbReference type="InterPro" id="IPR000630">
    <property type="entry name" value="Ribosomal_uS8"/>
</dbReference>
<dbReference type="InterPro" id="IPR047863">
    <property type="entry name" value="Ribosomal_uS8_CS"/>
</dbReference>
<dbReference type="InterPro" id="IPR035987">
    <property type="entry name" value="Ribosomal_uS8_sf"/>
</dbReference>
<dbReference type="NCBIfam" id="NF001109">
    <property type="entry name" value="PRK00136.1"/>
    <property type="match status" value="1"/>
</dbReference>
<dbReference type="PANTHER" id="PTHR11758">
    <property type="entry name" value="40S RIBOSOMAL PROTEIN S15A"/>
    <property type="match status" value="1"/>
</dbReference>
<dbReference type="Pfam" id="PF00410">
    <property type="entry name" value="Ribosomal_S8"/>
    <property type="match status" value="1"/>
</dbReference>
<dbReference type="SUPFAM" id="SSF56047">
    <property type="entry name" value="Ribosomal protein S8"/>
    <property type="match status" value="1"/>
</dbReference>
<dbReference type="PROSITE" id="PS00053">
    <property type="entry name" value="RIBOSOMAL_S8"/>
    <property type="match status" value="1"/>
</dbReference>
<sequence length="132" mass="14805">MVMTDPIADMLTRIRNANMVRHEKLEMPASTIKREVAEILKREGFIRDVEYLEDSKQGTLRVFLKYGASNERVITGLKRISKPGLRVYAKADEIPKVLGGLGIAIVSTSKGVMTDKEARQQKVGGEVIAYIW</sequence>
<gene>
    <name evidence="1" type="primary">rpsH</name>
    <name type="ordered locus">Exig_0110</name>
</gene>
<evidence type="ECO:0000255" key="1">
    <source>
        <dbReference type="HAMAP-Rule" id="MF_01302"/>
    </source>
</evidence>
<evidence type="ECO:0000305" key="2"/>
<proteinExistence type="inferred from homology"/>
<comment type="function">
    <text evidence="1">One of the primary rRNA binding proteins, it binds directly to 16S rRNA central domain where it helps coordinate assembly of the platform of the 30S subunit.</text>
</comment>
<comment type="subunit">
    <text evidence="1">Part of the 30S ribosomal subunit. Contacts proteins S5 and S12.</text>
</comment>
<comment type="similarity">
    <text evidence="1">Belongs to the universal ribosomal protein uS8 family.</text>
</comment>
<feature type="chain" id="PRO_1000140557" description="Small ribosomal subunit protein uS8">
    <location>
        <begin position="1"/>
        <end position="132"/>
    </location>
</feature>
<reference key="1">
    <citation type="submission" date="2008-04" db="EMBL/GenBank/DDBJ databases">
        <title>Complete sequence of chromosome of Exiguobacterium sibiricum 255-15.</title>
        <authorList>
            <consortium name="US DOE Joint Genome Institute"/>
            <person name="Copeland A."/>
            <person name="Lucas S."/>
            <person name="Lapidus A."/>
            <person name="Glavina del Rio T."/>
            <person name="Dalin E."/>
            <person name="Tice H."/>
            <person name="Bruce D."/>
            <person name="Goodwin L."/>
            <person name="Pitluck S."/>
            <person name="Kiss H."/>
            <person name="Chertkov O."/>
            <person name="Monk C."/>
            <person name="Brettin T."/>
            <person name="Detter J.C."/>
            <person name="Han C."/>
            <person name="Kuske C.R."/>
            <person name="Schmutz J."/>
            <person name="Larimer F."/>
            <person name="Land M."/>
            <person name="Hauser L."/>
            <person name="Kyrpides N."/>
            <person name="Mikhailova N."/>
            <person name="Vishnivetskaya T."/>
            <person name="Rodrigues D.F."/>
            <person name="Gilichinsky D."/>
            <person name="Tiedje J."/>
            <person name="Richardson P."/>
        </authorList>
    </citation>
    <scope>NUCLEOTIDE SEQUENCE [LARGE SCALE GENOMIC DNA]</scope>
    <source>
        <strain>DSM 17290 / CCUG 55495 / CIP 109462 / JCM 13490 / 255-15</strain>
    </source>
</reference>
<accession>B1YGW4</accession>
<organism>
    <name type="scientific">Exiguobacterium sibiricum (strain DSM 17290 / CCUG 55495 / CIP 109462 / JCM 13490 / 255-15)</name>
    <dbReference type="NCBI Taxonomy" id="262543"/>
    <lineage>
        <taxon>Bacteria</taxon>
        <taxon>Bacillati</taxon>
        <taxon>Bacillota</taxon>
        <taxon>Bacilli</taxon>
        <taxon>Bacillales</taxon>
        <taxon>Bacillales Family XII. Incertae Sedis</taxon>
        <taxon>Exiguobacterium</taxon>
    </lineage>
</organism>